<organism>
    <name type="scientific">Ophiophagus hannah</name>
    <name type="common">King cobra</name>
    <name type="synonym">Naja hannah</name>
    <dbReference type="NCBI Taxonomy" id="8665"/>
    <lineage>
        <taxon>Eukaryota</taxon>
        <taxon>Metazoa</taxon>
        <taxon>Chordata</taxon>
        <taxon>Craniata</taxon>
        <taxon>Vertebrata</taxon>
        <taxon>Euteleostomi</taxon>
        <taxon>Lepidosauria</taxon>
        <taxon>Squamata</taxon>
        <taxon>Bifurcata</taxon>
        <taxon>Unidentata</taxon>
        <taxon>Episquamata</taxon>
        <taxon>Toxicofera</taxon>
        <taxon>Serpentes</taxon>
        <taxon>Colubroidea</taxon>
        <taxon>Elapidae</taxon>
        <taxon>Elapinae</taxon>
        <taxon>Ophiophagus</taxon>
    </lineage>
</organism>
<evidence type="ECO:0000250" key="1">
    <source>
        <dbReference type="UniProtKB" id="Q69CK0"/>
    </source>
</evidence>
<evidence type="ECO:0000305" key="2"/>
<evidence type="ECO:0000305" key="3">
    <source>
    </source>
</evidence>
<name>3SDC3_OPHHA</name>
<accession>Q2VBN4</accession>
<keyword id="KW-0123">Cardiotoxin</keyword>
<keyword id="KW-1015">Disulfide bond</keyword>
<keyword id="KW-1213">G-protein coupled receptor impairing toxin</keyword>
<keyword id="KW-0964">Secreted</keyword>
<keyword id="KW-0732">Signal</keyword>
<keyword id="KW-0800">Toxin</keyword>
<reference key="1">
    <citation type="journal article" date="2006" name="Biochem. J.">
        <title>Novel genes encoding six kinds of three-finger toxins in Ophiophagus hannah (king cobra) and function characterization of two recombinant long-chain neurotoxins.</title>
        <authorList>
            <person name="Li J."/>
            <person name="Zhang H."/>
            <person name="Liu J."/>
            <person name="Xu K."/>
        </authorList>
    </citation>
    <scope>NUCLEOTIDE SEQUENCE [MRNA]</scope>
    <source>
        <tissue>Venom gland</tissue>
    </source>
</reference>
<reference key="2">
    <citation type="journal article" date="2013" name="Proc. Natl. Acad. Sci. U.S.A.">
        <title>The king cobra genome reveals dynamic gene evolution and adaptation in the snake venom system.</title>
        <authorList>
            <person name="Vonk F.J."/>
            <person name="Casewell N.R."/>
            <person name="Henkel C.V."/>
            <person name="Heimberg A.M."/>
            <person name="Jansen H.J."/>
            <person name="McCleary R.J."/>
            <person name="Kerkkamp H.M."/>
            <person name="Vos R.A."/>
            <person name="Guerreiro I."/>
            <person name="Calvete J.J."/>
            <person name="Wuster W."/>
            <person name="Woods A.E."/>
            <person name="Logan J.M."/>
            <person name="Harrison R.A."/>
            <person name="Castoe T.A."/>
            <person name="de Koning A.P."/>
            <person name="Pollock D.D."/>
            <person name="Yandell M."/>
            <person name="Calderon D."/>
            <person name="Renjifo C."/>
            <person name="Currier R.B."/>
            <person name="Salgado D."/>
            <person name="Pla D."/>
            <person name="Sanz L."/>
            <person name="Hyder A.S."/>
            <person name="Ribeiro J.M."/>
            <person name="Arntzen J.W."/>
            <person name="van den Thillart G.E."/>
            <person name="Boetzer M."/>
            <person name="Pirovano W."/>
            <person name="Dirks R.P."/>
            <person name="Spaink H.P."/>
            <person name="Duboule D."/>
            <person name="McGlinn E."/>
            <person name="Kini R.M."/>
            <person name="Richardson M.K."/>
        </authorList>
    </citation>
    <scope>IDENTIFICATION BY MASS SPECTROMETRY</scope>
    <source>
        <tissue>Venom</tissue>
    </source>
</reference>
<proteinExistence type="evidence at protein level"/>
<protein>
    <recommendedName>
        <fullName>Beta-cardiotoxin CTX23</fullName>
    </recommendedName>
</protein>
<dbReference type="EMBL" id="DQ273581">
    <property type="protein sequence ID" value="ABB83635.1"/>
    <property type="molecule type" value="mRNA"/>
</dbReference>
<dbReference type="SMR" id="Q2VBN4"/>
<dbReference type="GO" id="GO:0005576">
    <property type="term" value="C:extracellular region"/>
    <property type="evidence" value="ECO:0007669"/>
    <property type="project" value="UniProtKB-SubCell"/>
</dbReference>
<dbReference type="GO" id="GO:0090729">
    <property type="term" value="F:toxin activity"/>
    <property type="evidence" value="ECO:0007669"/>
    <property type="project" value="UniProtKB-KW"/>
</dbReference>
<dbReference type="CDD" id="cd00206">
    <property type="entry name" value="TFP_snake_toxin"/>
    <property type="match status" value="1"/>
</dbReference>
<dbReference type="FunFam" id="2.10.60.10:FF:000024">
    <property type="entry name" value="Cytotoxin 1"/>
    <property type="match status" value="1"/>
</dbReference>
<dbReference type="Gene3D" id="2.10.60.10">
    <property type="entry name" value="CD59"/>
    <property type="match status" value="1"/>
</dbReference>
<dbReference type="InterPro" id="IPR003572">
    <property type="entry name" value="Cytotoxin_Cobra"/>
</dbReference>
<dbReference type="InterPro" id="IPR003571">
    <property type="entry name" value="Snake_3FTx"/>
</dbReference>
<dbReference type="InterPro" id="IPR045860">
    <property type="entry name" value="Snake_toxin-like_sf"/>
</dbReference>
<dbReference type="InterPro" id="IPR018354">
    <property type="entry name" value="Snake_toxin_con_site"/>
</dbReference>
<dbReference type="InterPro" id="IPR054131">
    <property type="entry name" value="Toxin_cobra-type"/>
</dbReference>
<dbReference type="Pfam" id="PF21947">
    <property type="entry name" value="Toxin_cobra-type"/>
    <property type="match status" value="1"/>
</dbReference>
<dbReference type="PRINTS" id="PR00282">
    <property type="entry name" value="CYTOTOXIN"/>
</dbReference>
<dbReference type="SUPFAM" id="SSF57302">
    <property type="entry name" value="Snake toxin-like"/>
    <property type="match status" value="1"/>
</dbReference>
<dbReference type="PROSITE" id="PS00272">
    <property type="entry name" value="SNAKE_TOXIN"/>
    <property type="match status" value="1"/>
</dbReference>
<feature type="signal peptide" evidence="1">
    <location>
        <begin position="1"/>
        <end position="21"/>
    </location>
</feature>
<feature type="chain" id="PRO_5000006491" description="Beta-cardiotoxin CTX23">
    <location>
        <begin position="22"/>
        <end position="84"/>
    </location>
</feature>
<feature type="disulfide bond" evidence="1">
    <location>
        <begin position="24"/>
        <end position="43"/>
    </location>
</feature>
<feature type="disulfide bond" evidence="1">
    <location>
        <begin position="36"/>
        <end position="61"/>
    </location>
</feature>
<feature type="disulfide bond" evidence="1">
    <location>
        <begin position="65"/>
        <end position="76"/>
    </location>
</feature>
<feature type="disulfide bond" evidence="1">
    <location>
        <begin position="77"/>
        <end position="82"/>
    </location>
</feature>
<comment type="function">
    <text evidence="1">Acts as a beta-blocker by binding to beta-1 and beta-2 adrenergic receptors (ADRB1 and ADRB2). It dose-dependently decreases the heart rate (bradycardia), whereas conventional cardiotoxins increases it. At 100 mg/kg, intraperitoneal injection into mice provokes labored breathing, impaired locomotion, lack of response to external stimuli, and death (after 30 minutes).</text>
</comment>
<comment type="subcellular location">
    <subcellularLocation>
        <location evidence="3">Secreted</location>
    </subcellularLocation>
</comment>
<comment type="tissue specificity">
    <text evidence="2">Expressed by the venom gland.</text>
</comment>
<comment type="miscellaneous">
    <text evidence="1">Negative results: does not affect blood coagulation and does not show significant hemolytic activity.</text>
</comment>
<comment type="miscellaneous">
    <text evidence="2">Is classified as a P-type cytotoxin, since a proline residue stands at position 52 (Pro-31 in standard classification).</text>
</comment>
<comment type="similarity">
    <text evidence="2">Belongs to the three-finger toxin family. Short-chain subfamily. Aminergic toxin sub-subfamily.</text>
</comment>
<sequence length="84" mass="9296">MKTLLLTLVVVTIVCLDLGYTRKCLNTPLPLIYKTCPIGQDKCIKMTIKKLPSKYDVIRGCTDICPKSSADVVVVCCDTNKCNK</sequence>